<feature type="chain" id="PRO_0000142835" description="Protein W">
    <location>
        <begin position="1"/>
        <end position="318"/>
    </location>
</feature>
<feature type="region of interest" description="Disordered" evidence="2">
    <location>
        <begin position="1"/>
        <end position="23"/>
    </location>
</feature>
<feature type="region of interest" description="Disordered" evidence="2">
    <location>
        <begin position="38"/>
        <end position="318"/>
    </location>
</feature>
<feature type="compositionally biased region" description="Basic and acidic residues" evidence="2">
    <location>
        <begin position="7"/>
        <end position="20"/>
    </location>
</feature>
<feature type="compositionally biased region" description="Polar residues" evidence="2">
    <location>
        <begin position="50"/>
        <end position="59"/>
    </location>
</feature>
<feature type="compositionally biased region" description="Basic and acidic residues" evidence="2">
    <location>
        <begin position="83"/>
        <end position="101"/>
    </location>
</feature>
<feature type="compositionally biased region" description="Basic and acidic residues" evidence="2">
    <location>
        <begin position="150"/>
        <end position="168"/>
    </location>
</feature>
<feature type="compositionally biased region" description="Polar residues" evidence="2">
    <location>
        <begin position="191"/>
        <end position="206"/>
    </location>
</feature>
<feature type="modified residue" description="Phosphoserine; by host" evidence="1">
    <location>
        <position position="68"/>
    </location>
</feature>
<feature type="modified residue" description="Phosphoserine; by host" evidence="1">
    <location>
        <position position="125"/>
    </location>
</feature>
<feature type="modified residue" description="Phosphoserine; by host" evidence="1">
    <location>
        <position position="192"/>
    </location>
</feature>
<feature type="modified residue" description="Phosphoserine; by host" evidence="1">
    <location>
        <position position="249"/>
    </location>
</feature>
<feature type="modified residue" description="Phosphoserine; by host" evidence="1">
    <location>
        <position position="257"/>
    </location>
</feature>
<feature type="modified residue" description="Phosphoserine; by host" evidence="1">
    <location>
        <position position="260"/>
    </location>
</feature>
<feature type="sequence variant" evidence="4">
    <original>S</original>
    <variation>T</variation>
    <location>
        <position position="311"/>
    </location>
</feature>
<comment type="RNA editing">
    <location>
        <position position="318" evidence="3"/>
    </location>
    <text>Partially edited. RNA editing at this position consists of an insertion of one or two guanine nucleotides. The sequence displayed here is the W protein, derived from the +2G edited RNA. The unedited RNA gives rise to the P protein (AC P04859), the +1G edited RNA gives rise to the V protein (AC P69280).</text>
</comment>
<comment type="miscellaneous">
    <text>The P/V/C gene has two overlapping open reading frames. One encodes the P/V/W proteins and the other the C/Y proteins.</text>
</comment>
<gene>
    <name type="primary">P/V/C</name>
</gene>
<protein>
    <recommendedName>
        <fullName>Protein W</fullName>
    </recommendedName>
</protein>
<keyword id="KW-0597">Phosphoprotein</keyword>
<keyword id="KW-0691">RNA editing</keyword>
<organism>
    <name type="scientific">Sendai virus (strain Harris)</name>
    <name type="common">SeV</name>
    <dbReference type="NCBI Taxonomy" id="11196"/>
    <lineage>
        <taxon>Viruses</taxon>
        <taxon>Riboviria</taxon>
        <taxon>Orthornavirae</taxon>
        <taxon>Negarnaviricota</taxon>
        <taxon>Haploviricotina</taxon>
        <taxon>Monjiviricetes</taxon>
        <taxon>Mononegavirales</taxon>
        <taxon>Paramyxoviridae</taxon>
        <taxon>Feraresvirinae</taxon>
        <taxon>Respirovirus</taxon>
        <taxon>Respirovirus muris</taxon>
    </lineage>
</organism>
<organismHost>
    <name type="scientific">Cavia cutleri</name>
    <name type="common">Guinea pig</name>
    <dbReference type="NCBI Taxonomy" id="10144"/>
</organismHost>
<organismHost>
    <name type="scientific">Cricetidae sp.</name>
    <name type="common">Hamster</name>
    <dbReference type="NCBI Taxonomy" id="36483"/>
</organismHost>
<organismHost>
    <name type="scientific">Mus musculus</name>
    <name type="common">Mouse</name>
    <dbReference type="NCBI Taxonomy" id="10090"/>
</organismHost>
<organismHost>
    <name type="scientific">Rattus norvegicus</name>
    <name type="common">Rat</name>
    <dbReference type="NCBI Taxonomy" id="10116"/>
</organismHost>
<sequence length="318" mass="33533">MDQDAFILKEDSEVEREAPGGRESLSDVIGFLDAVLSSEPTDIGGDRSWLHNTINTPQGPGSAHRAKSEGEGEVSTPSTQDNRSGEESRVSGRTSKPEAEAHAGNLDKQNIHRAFGGRTGTNSVSQDLGDGGDSGILENPPNERGYPRSGIEDENREMAAHPDKRGEDQAEGLPEEVRGGTSLPDEGEGGASNNGRSMEPGSSHSARVTGVLVIPSPELEEAVLRRNKRRPTNSGSKPLTPATVPGTRSPPLNRYNSTGSPPGKPPSTQDEHINSGDTPAVRVKDRKPPIGTRSVSDCPANGRPIHPGLESDSTKKGA</sequence>
<name>W_SENDH</name>
<proteinExistence type="inferred from homology"/>
<accession>P69281</accession>
<evidence type="ECO:0000250" key="1"/>
<evidence type="ECO:0000256" key="2">
    <source>
        <dbReference type="SAM" id="MobiDB-lite"/>
    </source>
</evidence>
<evidence type="ECO:0000269" key="3">
    <source>
    </source>
</evidence>
<evidence type="ECO:0000269" key="4">
    <source ref="2"/>
</evidence>
<reference key="1">
    <citation type="journal article" date="1983" name="Cell">
        <title>Sendai virus contains overlapping genes expressed from a single mRNA.</title>
        <authorList>
            <person name="Giorgi C."/>
            <person name="Blumberg B.M."/>
            <person name="Kolakofsky D."/>
        </authorList>
    </citation>
    <scope>NUCLEOTIDE SEQUENCE [GENOMIC RNA]</scope>
</reference>
<reference key="2">
    <citation type="submission" date="2005-01" db="UniProtKB">
        <authorList>
            <person name="Kolakofsky D."/>
        </authorList>
    </citation>
    <scope>NUCLEOTIDE SEQUENCE [GENOMIC RNA]</scope>
    <scope>VARIANT THR-311</scope>
</reference>
<reference key="3">
    <citation type="journal article" date="1997" name="EMBO J.">
        <title>The paramyxovirus, Sendai virus, V protein encodes a luxury function required for viral pathogenesis.</title>
        <authorList>
            <person name="Kato A."/>
            <person name="Kiyotani K."/>
            <person name="Sakai Y."/>
            <person name="Yoshida T."/>
            <person name="Nagai Y."/>
        </authorList>
    </citation>
    <scope>RNA EDITING</scope>
</reference>